<proteinExistence type="evidence at transcript level"/>
<gene>
    <name type="primary">Brf2</name>
</gene>
<comment type="function">
    <text evidence="1">General activator of RNA polymerase III transcription. Factor exclusively required for RNA polymerase III transcription of genes with promoter elements upstream of the initiation sites. Contributes to the regulation of gene expression; functions as activator in the absence of oxidative stress. Down-regulates expression of target genes in response to oxidative stress. Overexpression protects cells against apoptosis in response to oxidative stress.</text>
</comment>
<comment type="subunit">
    <text evidence="1">Component of TFIIIB complexes. The TFIIIB complex has two activities, alpha and beta. The TFIIIB-alpha activity complex is composed of TBP, BDP1, and a complex containing both BRF2 and at least four stably associated proteins; this complex inhibits the transcription by pol III via its phosphorylation by CK2; YY1 facilitates the TFIIIB-alpha complex formation. Interacts with TBP; this interaction promotes recruitment of BRF2 to TATA box-containing promoters. Interacts with TBP and the BURE sequence (GC-rich sequence downstream from the TATA box) to form a strong ternary complex which is joined by BDP1; this ternary complex stimulates pol III transcription. Forms a trimeric complex composed of TBP, BRF2 and mini-SNAPc complex (SNAP43, SNAP50, and the N-terminal third of SNAP190) on the promoter. Assembly of the TBP-BRF2 complex is stimulated by SNAP190. Interacts with MAF1 and SNAPC4.</text>
</comment>
<comment type="subcellular location">
    <subcellularLocation>
        <location evidence="1">Nucleus</location>
    </subcellularLocation>
</comment>
<comment type="PTM">
    <text evidence="1">In response to oxidative stress, Cys-358 is reversibly oxidized to cysteine sulfenic acid. Oxidation of Cys-358 impairs formation of a ternary complex with TBP and DNA and down-regulates expression of target genes in response to oxidative stress.</text>
</comment>
<comment type="similarity">
    <text evidence="4">Belongs to the TFIIB family.</text>
</comment>
<protein>
    <recommendedName>
        <fullName>Transcription factor IIIB 50 kDa subunit</fullName>
    </recommendedName>
    <alternativeName>
        <fullName>B-related factor 2</fullName>
        <shortName>BRF-2</shortName>
    </alternativeName>
</protein>
<keyword id="KW-0010">Activator</keyword>
<keyword id="KW-0479">Metal-binding</keyword>
<keyword id="KW-0539">Nucleus</keyword>
<keyword id="KW-0558">Oxidation</keyword>
<keyword id="KW-0597">Phosphoprotein</keyword>
<keyword id="KW-1185">Reference proteome</keyword>
<keyword id="KW-0677">Repeat</keyword>
<keyword id="KW-0804">Transcription</keyword>
<keyword id="KW-0805">Transcription regulation</keyword>
<keyword id="KW-0862">Zinc</keyword>
<keyword id="KW-0863">Zinc-finger</keyword>
<organism>
    <name type="scientific">Rattus norvegicus</name>
    <name type="common">Rat</name>
    <dbReference type="NCBI Taxonomy" id="10116"/>
    <lineage>
        <taxon>Eukaryota</taxon>
        <taxon>Metazoa</taxon>
        <taxon>Chordata</taxon>
        <taxon>Craniata</taxon>
        <taxon>Vertebrata</taxon>
        <taxon>Euteleostomi</taxon>
        <taxon>Mammalia</taxon>
        <taxon>Eutheria</taxon>
        <taxon>Euarchontoglires</taxon>
        <taxon>Glires</taxon>
        <taxon>Rodentia</taxon>
        <taxon>Myomorpha</taxon>
        <taxon>Muroidea</taxon>
        <taxon>Muridae</taxon>
        <taxon>Murinae</taxon>
        <taxon>Rattus</taxon>
    </lineage>
</organism>
<sequence length="416" mass="46596">MPNGSRCPDCGSSELVEDSHYSQSQLVCSDCGCVVTEGVLTTTFSDEGNLREVTYSRSTGENEQVSRSQQRDLRRVRDLCRILKLPLTFEETAVSYYQKAYQLSGIRAARLQKKEVVVGCCVLITCRQHNWPLTMGAICTLLYADLDVFSSTYMQIVKLLGLDVPSLCLADLVKSYCSSFKLFQASPSMPAKYVEDKDKMLSRTLLLVELANETWLVTGRHPLPIITAATFLAWQSLRPSDRLTCSLARFCKLANVDLPYPAASRLQELLAVLLQMASQLAWLQVLRLDKRSVVKHIGDLLQHRHMLVRMAFQDGTAEVETKQQQPQGRGQQEEVGDSTFDLPKRKRPASPALLLPPCMLKPPKRTHTMPPDSVVTGDEDISDSEIEQYLRTPQEVRDFERAQAASRAAMSVPNPP</sequence>
<name>BRF2_RAT</name>
<evidence type="ECO:0000250" key="1">
    <source>
        <dbReference type="UniProtKB" id="Q9HAW0"/>
    </source>
</evidence>
<evidence type="ECO:0000255" key="2">
    <source>
        <dbReference type="PROSITE-ProRule" id="PRU00469"/>
    </source>
</evidence>
<evidence type="ECO:0000256" key="3">
    <source>
        <dbReference type="SAM" id="MobiDB-lite"/>
    </source>
</evidence>
<evidence type="ECO:0000305" key="4"/>
<reference key="1">
    <citation type="journal article" date="2004" name="Genome Res.">
        <title>The status, quality, and expansion of the NIH full-length cDNA project: the Mammalian Gene Collection (MGC).</title>
        <authorList>
            <consortium name="The MGC Project Team"/>
        </authorList>
    </citation>
    <scope>NUCLEOTIDE SEQUENCE [LARGE SCALE MRNA]</scope>
    <source>
        <tissue>Testis</tissue>
    </source>
</reference>
<dbReference type="EMBL" id="BC097435">
    <property type="protein sequence ID" value="AAH97435.1"/>
    <property type="molecule type" value="mRNA"/>
</dbReference>
<dbReference type="RefSeq" id="NP_001019944.1">
    <property type="nucleotide sequence ID" value="NM_001024773.1"/>
</dbReference>
<dbReference type="RefSeq" id="XP_063131511.1">
    <property type="nucleotide sequence ID" value="XM_063275441.1"/>
</dbReference>
<dbReference type="SMR" id="Q4V8D6"/>
<dbReference type="FunCoup" id="Q4V8D6">
    <property type="interactions" value="1252"/>
</dbReference>
<dbReference type="STRING" id="10116.ENSRNOP00000017324"/>
<dbReference type="PhosphoSitePlus" id="Q4V8D6"/>
<dbReference type="PaxDb" id="10116-ENSRNOP00000017324"/>
<dbReference type="Ensembl" id="ENSRNOT00000017324.7">
    <property type="protein sequence ID" value="ENSRNOP00000017324.4"/>
    <property type="gene ID" value="ENSRNOG00000012739.7"/>
</dbReference>
<dbReference type="GeneID" id="306542"/>
<dbReference type="KEGG" id="rno:306542"/>
<dbReference type="UCSC" id="RGD:1308817">
    <property type="organism name" value="rat"/>
</dbReference>
<dbReference type="AGR" id="RGD:1308817"/>
<dbReference type="CTD" id="55290"/>
<dbReference type="RGD" id="1308817">
    <property type="gene designation" value="Brf2"/>
</dbReference>
<dbReference type="eggNOG" id="KOG1598">
    <property type="taxonomic scope" value="Eukaryota"/>
</dbReference>
<dbReference type="GeneTree" id="ENSGT00390000002288"/>
<dbReference type="HOGENOM" id="CLU_039947_0_0_1"/>
<dbReference type="InParanoid" id="Q4V8D6"/>
<dbReference type="OMA" id="DLPHPAY"/>
<dbReference type="OrthoDB" id="2121711at2759"/>
<dbReference type="PhylomeDB" id="Q4V8D6"/>
<dbReference type="TreeFam" id="TF331596"/>
<dbReference type="Reactome" id="R-RNO-76071">
    <property type="pathway name" value="RNA Polymerase III Transcription Initiation From Type 3 Promoter"/>
</dbReference>
<dbReference type="PRO" id="PR:Q4V8D6"/>
<dbReference type="Proteomes" id="UP000002494">
    <property type="component" value="Chromosome 16"/>
</dbReference>
<dbReference type="Bgee" id="ENSRNOG00000012739">
    <property type="expression patterns" value="Expressed in thymus and 20 other cell types or tissues"/>
</dbReference>
<dbReference type="GO" id="GO:0005634">
    <property type="term" value="C:nucleus"/>
    <property type="evidence" value="ECO:0000318"/>
    <property type="project" value="GO_Central"/>
</dbReference>
<dbReference type="GO" id="GO:0000126">
    <property type="term" value="C:transcription factor TFIIIB complex"/>
    <property type="evidence" value="ECO:0000250"/>
    <property type="project" value="UniProtKB"/>
</dbReference>
<dbReference type="GO" id="GO:0097550">
    <property type="term" value="C:transcription preinitiation complex"/>
    <property type="evidence" value="ECO:0000318"/>
    <property type="project" value="GO_Central"/>
</dbReference>
<dbReference type="GO" id="GO:0016251">
    <property type="term" value="F:RNA polymerase II general transcription initiation factor activity"/>
    <property type="evidence" value="ECO:0000318"/>
    <property type="project" value="GO_Central"/>
</dbReference>
<dbReference type="GO" id="GO:0001006">
    <property type="term" value="F:RNA polymerase III type 3 promoter sequence-specific DNA binding"/>
    <property type="evidence" value="ECO:0000250"/>
    <property type="project" value="UniProtKB"/>
</dbReference>
<dbReference type="GO" id="GO:0017025">
    <property type="term" value="F:TBP-class protein binding"/>
    <property type="evidence" value="ECO:0000318"/>
    <property type="project" value="GO_Central"/>
</dbReference>
<dbReference type="GO" id="GO:0008270">
    <property type="term" value="F:zinc ion binding"/>
    <property type="evidence" value="ECO:0007669"/>
    <property type="project" value="UniProtKB-KW"/>
</dbReference>
<dbReference type="GO" id="GO:0034599">
    <property type="term" value="P:cellular response to oxidative stress"/>
    <property type="evidence" value="ECO:0000250"/>
    <property type="project" value="UniProtKB"/>
</dbReference>
<dbReference type="GO" id="GO:0006359">
    <property type="term" value="P:regulation of transcription by RNA polymerase III"/>
    <property type="evidence" value="ECO:0000250"/>
    <property type="project" value="UniProtKB"/>
</dbReference>
<dbReference type="GO" id="GO:0070897">
    <property type="term" value="P:transcription preinitiation complex assembly"/>
    <property type="evidence" value="ECO:0007669"/>
    <property type="project" value="InterPro"/>
</dbReference>
<dbReference type="CDD" id="cd20555">
    <property type="entry name" value="CYCLIN_BRF2"/>
    <property type="match status" value="1"/>
</dbReference>
<dbReference type="FunFam" id="1.10.472.10:FF:000046">
    <property type="entry name" value="Transcription factor IIIB 50 kDa subunit"/>
    <property type="match status" value="1"/>
</dbReference>
<dbReference type="FunFam" id="2.20.25.10:FF:000014">
    <property type="entry name" value="Transcription factor IIIB 50 kDa subunit"/>
    <property type="match status" value="1"/>
</dbReference>
<dbReference type="Gene3D" id="2.20.25.10">
    <property type="match status" value="1"/>
</dbReference>
<dbReference type="Gene3D" id="1.10.472.10">
    <property type="entry name" value="Cyclin-like"/>
    <property type="match status" value="1"/>
</dbReference>
<dbReference type="InterPro" id="IPR054078">
    <property type="entry name" value="BRF2-like_C"/>
</dbReference>
<dbReference type="InterPro" id="IPR036915">
    <property type="entry name" value="Cyclin-like_sf"/>
</dbReference>
<dbReference type="InterPro" id="IPR000812">
    <property type="entry name" value="TFIIB"/>
</dbReference>
<dbReference type="InterPro" id="IPR013137">
    <property type="entry name" value="Znf_TFIIB"/>
</dbReference>
<dbReference type="PANTHER" id="PTHR11618:SF5">
    <property type="entry name" value="TRANSCRIPTION FACTOR IIIB 50 KDA SUBUNIT"/>
    <property type="match status" value="1"/>
</dbReference>
<dbReference type="PANTHER" id="PTHR11618">
    <property type="entry name" value="TRANSCRIPTION INITIATION FACTOR IIB-RELATED"/>
    <property type="match status" value="1"/>
</dbReference>
<dbReference type="Pfam" id="PF21886">
    <property type="entry name" value="BRF2-like_C_cyclin_rpt"/>
    <property type="match status" value="1"/>
</dbReference>
<dbReference type="Pfam" id="PF08271">
    <property type="entry name" value="Zn_Ribbon_TF"/>
    <property type="match status" value="1"/>
</dbReference>
<dbReference type="SUPFAM" id="SSF47954">
    <property type="entry name" value="Cyclin-like"/>
    <property type="match status" value="1"/>
</dbReference>
<dbReference type="SUPFAM" id="SSF57783">
    <property type="entry name" value="Zinc beta-ribbon"/>
    <property type="match status" value="1"/>
</dbReference>
<dbReference type="PROSITE" id="PS51134">
    <property type="entry name" value="ZF_TFIIB"/>
    <property type="match status" value="1"/>
</dbReference>
<feature type="chain" id="PRO_0000337190" description="Transcription factor IIIB 50 kDa subunit">
    <location>
        <begin position="1"/>
        <end position="416"/>
    </location>
</feature>
<feature type="repeat" description="1">
    <location>
        <begin position="72"/>
        <end position="157"/>
    </location>
</feature>
<feature type="repeat" description="2">
    <location>
        <begin position="173"/>
        <end position="249"/>
    </location>
</feature>
<feature type="zinc finger region" description="TFIIB-type" evidence="2">
    <location>
        <begin position="3"/>
        <end position="36"/>
    </location>
</feature>
<feature type="region of interest" description="Interaction with target DNA" evidence="1">
    <location>
        <begin position="108"/>
        <end position="114"/>
    </location>
</feature>
<feature type="region of interest" description="Disordered" evidence="3">
    <location>
        <begin position="317"/>
        <end position="385"/>
    </location>
</feature>
<feature type="region of interest" description="Required for the formation of a ternary complex with DNA and TBP; not required for interaction with TBP in the absence of DNA" evidence="1">
    <location>
        <begin position="354"/>
        <end position="360"/>
    </location>
</feature>
<feature type="region of interest" description="Required for interaction with TBP and formation of a ternary complex with DNA and TBP" evidence="1">
    <location>
        <begin position="362"/>
        <end position="416"/>
    </location>
</feature>
<feature type="binding site" evidence="2">
    <location>
        <position position="7"/>
    </location>
    <ligand>
        <name>Zn(2+)</name>
        <dbReference type="ChEBI" id="CHEBI:29105"/>
    </ligand>
</feature>
<feature type="binding site" evidence="2">
    <location>
        <position position="10"/>
    </location>
    <ligand>
        <name>Zn(2+)</name>
        <dbReference type="ChEBI" id="CHEBI:29105"/>
    </ligand>
</feature>
<feature type="binding site" evidence="2">
    <location>
        <position position="28"/>
    </location>
    <ligand>
        <name>Zn(2+)</name>
        <dbReference type="ChEBI" id="CHEBI:29105"/>
    </ligand>
</feature>
<feature type="binding site" evidence="2">
    <location>
        <position position="31"/>
    </location>
    <ligand>
        <name>Zn(2+)</name>
        <dbReference type="ChEBI" id="CHEBI:29105"/>
    </ligand>
</feature>
<feature type="modified residue" description="Phosphoserine" evidence="1">
    <location>
        <position position="350"/>
    </location>
</feature>
<feature type="modified residue" description="Cysteine sulfenic acid (-SOH)" evidence="1">
    <location>
        <position position="358"/>
    </location>
</feature>
<accession>Q4V8D6</accession>